<evidence type="ECO:0000250" key="1">
    <source>
        <dbReference type="UniProtKB" id="Q7XPM8"/>
    </source>
</evidence>
<evidence type="ECO:0000250" key="2">
    <source>
        <dbReference type="UniProtKB" id="Q9C9E3"/>
    </source>
</evidence>
<evidence type="ECO:0000250" key="3">
    <source>
        <dbReference type="UniProtKB" id="Q9LMA8"/>
    </source>
</evidence>
<evidence type="ECO:0000255" key="4"/>
<evidence type="ECO:0000255" key="5">
    <source>
        <dbReference type="PROSITE-ProRule" id="PRU00650"/>
    </source>
</evidence>
<evidence type="ECO:0000255" key="6">
    <source>
        <dbReference type="PROSITE-ProRule" id="PRU00768"/>
    </source>
</evidence>
<evidence type="ECO:0000256" key="7">
    <source>
        <dbReference type="SAM" id="MobiDB-lite"/>
    </source>
</evidence>
<evidence type="ECO:0000269" key="8">
    <source>
    </source>
</evidence>
<evidence type="ECO:0000269" key="9">
    <source>
    </source>
</evidence>
<evidence type="ECO:0000269" key="10">
    <source>
    </source>
</evidence>
<evidence type="ECO:0000269" key="11">
    <source>
    </source>
</evidence>
<evidence type="ECO:0000269" key="12">
    <source>
    </source>
</evidence>
<evidence type="ECO:0000303" key="13">
    <source>
    </source>
</evidence>
<evidence type="ECO:0000303" key="14">
    <source>
    </source>
</evidence>
<evidence type="ECO:0000303" key="15">
    <source>
    </source>
</evidence>
<evidence type="ECO:0000305" key="16"/>
<evidence type="ECO:0000312" key="17">
    <source>
        <dbReference type="Araport" id="AT5G20900"/>
    </source>
</evidence>
<evidence type="ECO:0000312" key="18">
    <source>
        <dbReference type="EMBL" id="AF296834"/>
    </source>
</evidence>
<organism>
    <name type="scientific">Arabidopsis thaliana</name>
    <name type="common">Mouse-ear cress</name>
    <dbReference type="NCBI Taxonomy" id="3702"/>
    <lineage>
        <taxon>Eukaryota</taxon>
        <taxon>Viridiplantae</taxon>
        <taxon>Streptophyta</taxon>
        <taxon>Embryophyta</taxon>
        <taxon>Tracheophyta</taxon>
        <taxon>Spermatophyta</taxon>
        <taxon>Magnoliopsida</taxon>
        <taxon>eudicotyledons</taxon>
        <taxon>Gunneridae</taxon>
        <taxon>Pentapetalae</taxon>
        <taxon>rosids</taxon>
        <taxon>malvids</taxon>
        <taxon>Brassicales</taxon>
        <taxon>Brassicaceae</taxon>
        <taxon>Camelineae</taxon>
        <taxon>Arabidopsis</taxon>
    </lineage>
</organism>
<feature type="chain" id="PRO_0000300642" description="Protein TIFY 3B">
    <location>
        <begin position="1"/>
        <end position="187"/>
    </location>
</feature>
<feature type="domain" description="Tify" evidence="5">
    <location>
        <begin position="51"/>
        <end position="86"/>
    </location>
</feature>
<feature type="region of interest" description="Disordered" evidence="7">
    <location>
        <begin position="1"/>
        <end position="50"/>
    </location>
</feature>
<feature type="region of interest" description="Disordered" evidence="7">
    <location>
        <begin position="152"/>
        <end position="187"/>
    </location>
</feature>
<feature type="short sequence motif" description="Jas" evidence="4">
    <location>
        <begin position="139"/>
        <end position="163"/>
    </location>
</feature>
<feature type="short sequence motif" description="Nuclear localization signal" evidence="6">
    <location>
        <begin position="141"/>
        <end position="148"/>
    </location>
</feature>
<feature type="compositionally biased region" description="Basic and acidic residues" evidence="7">
    <location>
        <begin position="1"/>
        <end position="10"/>
    </location>
</feature>
<feature type="compositionally biased region" description="Gly residues" evidence="7">
    <location>
        <begin position="14"/>
        <end position="32"/>
    </location>
</feature>
<proteinExistence type="evidence at protein level"/>
<gene>
    <name evidence="13" type="primary">TIFY3B</name>
    <name evidence="14 15" type="synonym">JAZ12</name>
    <name evidence="17" type="ordered locus">At5g20900</name>
    <name evidence="18" type="ORF">F22D1.70</name>
</gene>
<accession>Q9C5K8</accession>
<reference key="1">
    <citation type="journal article" date="2000" name="Nature">
        <title>Sequence and analysis of chromosome 5 of the plant Arabidopsis thaliana.</title>
        <authorList>
            <person name="Tabata S."/>
            <person name="Kaneko T."/>
            <person name="Nakamura Y."/>
            <person name="Kotani H."/>
            <person name="Kato T."/>
            <person name="Asamizu E."/>
            <person name="Miyajima N."/>
            <person name="Sasamoto S."/>
            <person name="Kimura T."/>
            <person name="Hosouchi T."/>
            <person name="Kawashima K."/>
            <person name="Kohara M."/>
            <person name="Matsumoto M."/>
            <person name="Matsuno A."/>
            <person name="Muraki A."/>
            <person name="Nakayama S."/>
            <person name="Nakazaki N."/>
            <person name="Naruo K."/>
            <person name="Okumura S."/>
            <person name="Shinpo S."/>
            <person name="Takeuchi C."/>
            <person name="Wada T."/>
            <person name="Watanabe A."/>
            <person name="Yamada M."/>
            <person name="Yasuda M."/>
            <person name="Sato S."/>
            <person name="de la Bastide M."/>
            <person name="Huang E."/>
            <person name="Spiegel L."/>
            <person name="Gnoj L."/>
            <person name="O'Shaughnessy A."/>
            <person name="Preston R."/>
            <person name="Habermann K."/>
            <person name="Murray J."/>
            <person name="Johnson D."/>
            <person name="Rohlfing T."/>
            <person name="Nelson J."/>
            <person name="Stoneking T."/>
            <person name="Pepin K."/>
            <person name="Spieth J."/>
            <person name="Sekhon M."/>
            <person name="Armstrong J."/>
            <person name="Becker M."/>
            <person name="Belter E."/>
            <person name="Cordum H."/>
            <person name="Cordes M."/>
            <person name="Courtney L."/>
            <person name="Courtney W."/>
            <person name="Dante M."/>
            <person name="Du H."/>
            <person name="Edwards J."/>
            <person name="Fryman J."/>
            <person name="Haakensen B."/>
            <person name="Lamar E."/>
            <person name="Latreille P."/>
            <person name="Leonard S."/>
            <person name="Meyer R."/>
            <person name="Mulvaney E."/>
            <person name="Ozersky P."/>
            <person name="Riley A."/>
            <person name="Strowmatt C."/>
            <person name="Wagner-McPherson C."/>
            <person name="Wollam A."/>
            <person name="Yoakum M."/>
            <person name="Bell M."/>
            <person name="Dedhia N."/>
            <person name="Parnell L."/>
            <person name="Shah R."/>
            <person name="Rodriguez M."/>
            <person name="Hoon See L."/>
            <person name="Vil D."/>
            <person name="Baker J."/>
            <person name="Kirchoff K."/>
            <person name="Toth K."/>
            <person name="King L."/>
            <person name="Bahret A."/>
            <person name="Miller B."/>
            <person name="Marra M.A."/>
            <person name="Martienssen R."/>
            <person name="McCombie W.R."/>
            <person name="Wilson R.K."/>
            <person name="Murphy G."/>
            <person name="Bancroft I."/>
            <person name="Volckaert G."/>
            <person name="Wambutt R."/>
            <person name="Duesterhoeft A."/>
            <person name="Stiekema W."/>
            <person name="Pohl T."/>
            <person name="Entian K.-D."/>
            <person name="Terryn N."/>
            <person name="Hartley N."/>
            <person name="Bent E."/>
            <person name="Johnson S."/>
            <person name="Langham S.-A."/>
            <person name="McCullagh B."/>
            <person name="Robben J."/>
            <person name="Grymonprez B."/>
            <person name="Zimmermann W."/>
            <person name="Ramsperger U."/>
            <person name="Wedler H."/>
            <person name="Balke K."/>
            <person name="Wedler E."/>
            <person name="Peters S."/>
            <person name="van Staveren M."/>
            <person name="Dirkse W."/>
            <person name="Mooijman P."/>
            <person name="Klein Lankhorst R."/>
            <person name="Weitzenegger T."/>
            <person name="Bothe G."/>
            <person name="Rose M."/>
            <person name="Hauf J."/>
            <person name="Berneiser S."/>
            <person name="Hempel S."/>
            <person name="Feldpausch M."/>
            <person name="Lamberth S."/>
            <person name="Villarroel R."/>
            <person name="Gielen J."/>
            <person name="Ardiles W."/>
            <person name="Bents O."/>
            <person name="Lemcke K."/>
            <person name="Kolesov G."/>
            <person name="Mayer K.F.X."/>
            <person name="Rudd S."/>
            <person name="Schoof H."/>
            <person name="Schueller C."/>
            <person name="Zaccaria P."/>
            <person name="Mewes H.-W."/>
            <person name="Bevan M."/>
            <person name="Fransz P.F."/>
        </authorList>
    </citation>
    <scope>NUCLEOTIDE SEQUENCE [LARGE SCALE GENOMIC DNA]</scope>
    <source>
        <strain>cv. Columbia</strain>
    </source>
</reference>
<reference key="2">
    <citation type="journal article" date="2017" name="Plant J.">
        <title>Araport11: a complete reannotation of the Arabidopsis thaliana reference genome.</title>
        <authorList>
            <person name="Cheng C.Y."/>
            <person name="Krishnakumar V."/>
            <person name="Chan A.P."/>
            <person name="Thibaud-Nissen F."/>
            <person name="Schobel S."/>
            <person name="Town C.D."/>
        </authorList>
    </citation>
    <scope>GENOME REANNOTATION</scope>
    <source>
        <strain>cv. Columbia</strain>
    </source>
</reference>
<reference key="3">
    <citation type="journal article" date="2003" name="Science">
        <title>Empirical analysis of transcriptional activity in the Arabidopsis genome.</title>
        <authorList>
            <person name="Yamada K."/>
            <person name="Lim J."/>
            <person name="Dale J.M."/>
            <person name="Chen H."/>
            <person name="Shinn P."/>
            <person name="Palm C.J."/>
            <person name="Southwick A.M."/>
            <person name="Wu H.C."/>
            <person name="Kim C.J."/>
            <person name="Nguyen M."/>
            <person name="Pham P.K."/>
            <person name="Cheuk R.F."/>
            <person name="Karlin-Newmann G."/>
            <person name="Liu S.X."/>
            <person name="Lam B."/>
            <person name="Sakano H."/>
            <person name="Wu T."/>
            <person name="Yu G."/>
            <person name="Miranda M."/>
            <person name="Quach H.L."/>
            <person name="Tripp M."/>
            <person name="Chang C.H."/>
            <person name="Lee J.M."/>
            <person name="Toriumi M.J."/>
            <person name="Chan M.M."/>
            <person name="Tang C.C."/>
            <person name="Onodera C.S."/>
            <person name="Deng J.M."/>
            <person name="Akiyama K."/>
            <person name="Ansari Y."/>
            <person name="Arakawa T."/>
            <person name="Banh J."/>
            <person name="Banno F."/>
            <person name="Bowser L."/>
            <person name="Brooks S.Y."/>
            <person name="Carninci P."/>
            <person name="Chao Q."/>
            <person name="Choy N."/>
            <person name="Enju A."/>
            <person name="Goldsmith A.D."/>
            <person name="Gurjal M."/>
            <person name="Hansen N.F."/>
            <person name="Hayashizaki Y."/>
            <person name="Johnson-Hopson C."/>
            <person name="Hsuan V.W."/>
            <person name="Iida K."/>
            <person name="Karnes M."/>
            <person name="Khan S."/>
            <person name="Koesema E."/>
            <person name="Ishida J."/>
            <person name="Jiang P.X."/>
            <person name="Jones T."/>
            <person name="Kawai J."/>
            <person name="Kamiya A."/>
            <person name="Meyers C."/>
            <person name="Nakajima M."/>
            <person name="Narusaka M."/>
            <person name="Seki M."/>
            <person name="Sakurai T."/>
            <person name="Satou M."/>
            <person name="Tamse R."/>
            <person name="Vaysberg M."/>
            <person name="Wallender E.K."/>
            <person name="Wong C."/>
            <person name="Yamamura Y."/>
            <person name="Yuan S."/>
            <person name="Shinozaki K."/>
            <person name="Davis R.W."/>
            <person name="Theologis A."/>
            <person name="Ecker J.R."/>
        </authorList>
    </citation>
    <scope>NUCLEOTIDE SEQUENCE [LARGE SCALE MRNA]</scope>
    <source>
        <strain>cv. Columbia</strain>
    </source>
</reference>
<reference key="4">
    <citation type="journal article" date="2007" name="Nature">
        <title>The JAZ family of repressors is the missing link in jasmonate signalling.</title>
        <authorList>
            <person name="Chini A."/>
            <person name="Fonseca S."/>
            <person name="Fernandez G."/>
            <person name="Adie B."/>
            <person name="Chico J.M."/>
            <person name="Lorenzo O."/>
            <person name="Garcia-Casado G."/>
            <person name="Lopez-Vidriero I."/>
            <person name="Lozano F.M."/>
            <person name="Ponce M.R."/>
            <person name="Micol J.L."/>
            <person name="Solano R."/>
        </authorList>
    </citation>
    <scope>GENE FAMILY</scope>
    <scope>NOMENCLATURE</scope>
</reference>
<reference key="5">
    <citation type="journal article" date="2007" name="Plant Cell">
        <title>A downstream mediator in the growth repression limb of the jasmonate pathway.</title>
        <authorList>
            <person name="Yan Y."/>
            <person name="Stolz S."/>
            <person name="Chetelat A."/>
            <person name="Reymond P."/>
            <person name="Pagni M."/>
            <person name="Dubugnon L."/>
            <person name="Farmer E.E."/>
        </authorList>
    </citation>
    <scope>DOMAIN</scope>
</reference>
<reference key="6">
    <citation type="journal article" date="2007" name="Trends Plant Sci.">
        <title>The tify family previously known as ZIM.</title>
        <authorList>
            <person name="Vanholme B."/>
            <person name="Grunewald W."/>
            <person name="Bateman A."/>
            <person name="Kohchi T."/>
            <person name="Gheysen G."/>
        </authorList>
    </citation>
    <scope>GENE FAMILY</scope>
    <scope>NOMENCLATURE</scope>
</reference>
<reference key="7">
    <citation type="journal article" date="2008" name="Plant Physiol.">
        <title>Regulation and function of Arabidopsis JASMONATE ZIM-domain genes in response to wounding and herbivory.</title>
        <authorList>
            <person name="Chung H.S."/>
            <person name="Koo A.J."/>
            <person name="Gao X."/>
            <person name="Jayanty S."/>
            <person name="Thines B."/>
            <person name="Jones A.D."/>
            <person name="Howe G.A."/>
        </authorList>
    </citation>
    <scope>INDUCTION BY WOUNDING AND HERBIVORY</scope>
</reference>
<reference key="8">
    <citation type="journal article" date="2009" name="Plant Cell">
        <title>A critical role for the TIFY motif in repression of jasmonate signaling by a stabilized splice variant of the JASMONATE ZIM-domain protein JAZ10 in Arabidopsis.</title>
        <authorList>
            <person name="Chung H.S."/>
            <person name="Howe G.A."/>
        </authorList>
    </citation>
    <scope>FUNCTION</scope>
    <scope>INTERACTION WITH TIFY10A/JAZ1; TIFY10B/JAZ2; TIFY11A/JAZ5; TIFY11B/JAZ6; TIFY5A/JAZ8 AND TIFY9/JAZ10</scope>
</reference>
<reference key="9">
    <citation type="journal article" date="2009" name="Plant J.">
        <title>The ZIM domain mediates homo- and heteromeric interactions between Arabidopsis JAZ proteins.</title>
        <authorList>
            <person name="Chini A."/>
            <person name="Fonseca S."/>
            <person name="Chico J.M."/>
            <person name="Fernandez-Calvo P."/>
            <person name="Solano R."/>
        </authorList>
    </citation>
    <scope>INTERACTION WITH MYC2</scope>
</reference>
<reference key="10">
    <citation type="journal article" date="2009" name="Plant Physiol.">
        <title>Large-scale Arabidopsis phosphoproteome profiling reveals novel chloroplast kinase substrates and phosphorylation networks.</title>
        <authorList>
            <person name="Reiland S."/>
            <person name="Messerli G."/>
            <person name="Baerenfaller K."/>
            <person name="Gerrits B."/>
            <person name="Endler A."/>
            <person name="Grossmann J."/>
            <person name="Gruissem W."/>
            <person name="Baginsky S."/>
        </authorList>
    </citation>
    <scope>IDENTIFICATION BY MASS SPECTROMETRY [LARGE SCALE ANALYSIS]</scope>
</reference>
<reference key="11">
    <citation type="journal article" date="2010" name="Nature">
        <title>NINJA connects the co-repressor TOPLESS to jasmonate signalling.</title>
        <authorList>
            <person name="Pauwels L."/>
            <person name="Barbero G.F."/>
            <person name="Geerinck J."/>
            <person name="Tilleman S."/>
            <person name="Grunewald W."/>
            <person name="Perez A.C."/>
            <person name="Chico J.M."/>
            <person name="Bossche R.V."/>
            <person name="Sewell J."/>
            <person name="Gil E."/>
            <person name="Garcia-Casado G."/>
            <person name="Witters E."/>
            <person name="Inze D."/>
            <person name="Long J.A."/>
            <person name="De Jaeger G."/>
            <person name="Solano R."/>
            <person name="Goossens A."/>
        </authorList>
    </citation>
    <scope>INTERACTION WITH TIFY10A/JAZ1 AND AFPH2/NINJA</scope>
</reference>
<reference key="12">
    <citation type="journal article" date="2013" name="PLoS Pathog.">
        <title>Bacterial effector activates jasmonate signaling by directly targeting JAZ transcriptional repressors.</title>
        <authorList>
            <person name="Jiang S."/>
            <person name="Yao J."/>
            <person name="Ma K.-W."/>
            <person name="Zhou H."/>
            <person name="Song J."/>
            <person name="He S.Y."/>
            <person name="Ma W."/>
        </authorList>
    </citation>
    <scope>INTERACTION WITH PSEUDOMONAS SYRINGAE HOPZ1A (MICROBIAL INFECTION)</scope>
    <source>
        <strain>cv. Columbia</strain>
    </source>
</reference>
<comment type="function">
    <text evidence="9">Repressor of jasmonate responses.</text>
</comment>
<comment type="subunit">
    <text evidence="9 10 11">Interacts with MYC2, AFPH2/NINJA, TIFY10A/JAZ1, TIFY10B/JAZ2, TIFY11A/JAZ5, TIFY11B/JAZ6, TIFY5A/JAZ8 and TIFY9/JAZ10.</text>
</comment>
<comment type="subunit">
    <text evidence="12">(Microbial infection) Interacts with the pathogenic Pseudomonas syringae HopZ1a protein.</text>
</comment>
<comment type="interaction">
    <interactant intactId="EBI-2312231">
        <id>Q9C5K8</id>
    </interactant>
    <interactant intactId="EBI-1787005">
        <id>Q9SV55</id>
        <label>AFPH2</label>
    </interactant>
    <organismsDiffer>false</organismsDiffer>
    <experiments>7</experiments>
</comment>
<comment type="interaction">
    <interactant intactId="EBI-2312231">
        <id>Q9C5K8</id>
    </interactant>
    <interactant intactId="EBI-25514634">
        <id>P32068</id>
        <label>ASA1</label>
    </interactant>
    <organismsDiffer>false</organismsDiffer>
    <experiments>3</experiments>
</comment>
<comment type="interaction">
    <interactant intactId="EBI-2312231">
        <id>Q9C5K8</id>
    </interactant>
    <interactant intactId="EBI-4434261">
        <id>Q9LNJ5</id>
        <label>BHLH13</label>
    </interactant>
    <organismsDiffer>false</organismsDiffer>
    <experiments>7</experiments>
</comment>
<comment type="interaction">
    <interactant intactId="EBI-2312231">
        <id>Q9C5K8</id>
    </interactant>
    <interactant intactId="EBI-1792336">
        <id>Q39204</id>
        <label>MYC2</label>
    </interactant>
    <organismsDiffer>false</organismsDiffer>
    <experiments>7</experiments>
</comment>
<comment type="interaction">
    <interactant intactId="EBI-2312231">
        <id>Q9C5K8</id>
    </interactant>
    <interactant intactId="EBI-15845995">
        <id>Q9FIP9</id>
        <label>MYC3</label>
    </interactant>
    <organismsDiffer>false</organismsDiffer>
    <experiments>2</experiments>
</comment>
<comment type="interaction">
    <interactant intactId="EBI-2312231">
        <id>Q9C5K8</id>
    </interactant>
    <interactant intactId="EBI-15406909">
        <id>O49687</id>
        <label>MYC4</label>
    </interactant>
    <organismsDiffer>false</organismsDiffer>
    <experiments>4</experiments>
</comment>
<comment type="subcellular location">
    <subcellularLocation>
        <location evidence="6">Nucleus</location>
    </subcellularLocation>
</comment>
<comment type="induction">
    <text evidence="3">(Microbial infection) Triggered to degradation by the pathogenic Pseudomonas syringae HopZ1a protein in a COI1-dependent manner, thereby activating host jasmonate signaling.</text>
</comment>
<comment type="induction">
    <text evidence="8">Up-regulated by wounding and herbivory.</text>
</comment>
<comment type="domain">
    <text evidence="1 2">The jas domain (139-163) is required for interaction with COI1 and Pseudomonas syringae HopZ1a.</text>
</comment>
<comment type="PTM">
    <text evidence="2">(Microbial infection) Acetylated by Pseudomonas syringae HopZ1a.</text>
</comment>
<comment type="PTM">
    <text evidence="1">Ubiquitinated. Targeted for degradation by the SCF(COI1) E3 ubiquitin ligase-proteasome pathway during jasmonate signaling.</text>
</comment>
<comment type="similarity">
    <text evidence="16">Belongs to the TIFY/JAZ family.</text>
</comment>
<dbReference type="EMBL" id="AF296834">
    <property type="status" value="NOT_ANNOTATED_CDS"/>
    <property type="molecule type" value="Genomic_DNA"/>
</dbReference>
<dbReference type="EMBL" id="CP002688">
    <property type="protein sequence ID" value="AED92902.1"/>
    <property type="molecule type" value="Genomic_DNA"/>
</dbReference>
<dbReference type="EMBL" id="AF360184">
    <property type="protein sequence ID" value="AAK25894.1"/>
    <property type="molecule type" value="mRNA"/>
</dbReference>
<dbReference type="EMBL" id="AY051013">
    <property type="protein sequence ID" value="AAK93690.1"/>
    <property type="molecule type" value="mRNA"/>
</dbReference>
<dbReference type="RefSeq" id="NP_197590.1">
    <property type="nucleotide sequence ID" value="NM_122098.5"/>
</dbReference>
<dbReference type="SMR" id="Q9C5K8"/>
<dbReference type="BioGRID" id="17489">
    <property type="interactions" value="23"/>
</dbReference>
<dbReference type="DIP" id="DIP-53279N"/>
<dbReference type="FunCoup" id="Q9C5K8">
    <property type="interactions" value="742"/>
</dbReference>
<dbReference type="IntAct" id="Q9C5K8">
    <property type="interactions" value="16"/>
</dbReference>
<dbReference type="STRING" id="3702.Q9C5K8"/>
<dbReference type="iPTMnet" id="Q9C5K8"/>
<dbReference type="PaxDb" id="3702-AT5G20900.1"/>
<dbReference type="ProteomicsDB" id="234354"/>
<dbReference type="EnsemblPlants" id="AT5G20900.1">
    <property type="protein sequence ID" value="AT5G20900.1"/>
    <property type="gene ID" value="AT5G20900"/>
</dbReference>
<dbReference type="GeneID" id="832214"/>
<dbReference type="Gramene" id="AT5G20900.1">
    <property type="protein sequence ID" value="AT5G20900.1"/>
    <property type="gene ID" value="AT5G20900"/>
</dbReference>
<dbReference type="KEGG" id="ath:AT5G20900"/>
<dbReference type="Araport" id="AT5G20900"/>
<dbReference type="TAIR" id="AT5G20900">
    <property type="gene designation" value="JAZ12"/>
</dbReference>
<dbReference type="eggNOG" id="ENOG502S12Y">
    <property type="taxonomic scope" value="Eukaryota"/>
</dbReference>
<dbReference type="HOGENOM" id="CLU_088770_2_0_1"/>
<dbReference type="InParanoid" id="Q9C5K8"/>
<dbReference type="OMA" id="IMPAQLT"/>
<dbReference type="PhylomeDB" id="Q9C5K8"/>
<dbReference type="PRO" id="PR:Q9C5K8"/>
<dbReference type="Proteomes" id="UP000006548">
    <property type="component" value="Chromosome 5"/>
</dbReference>
<dbReference type="ExpressionAtlas" id="Q9C5K8">
    <property type="expression patterns" value="baseline and differential"/>
</dbReference>
<dbReference type="GO" id="GO:0005634">
    <property type="term" value="C:nucleus"/>
    <property type="evidence" value="ECO:0007669"/>
    <property type="project" value="UniProtKB-SubCell"/>
</dbReference>
<dbReference type="GO" id="GO:0006952">
    <property type="term" value="P:defense response"/>
    <property type="evidence" value="ECO:0007669"/>
    <property type="project" value="UniProtKB-KW"/>
</dbReference>
<dbReference type="InterPro" id="IPR018467">
    <property type="entry name" value="CCT_CS"/>
</dbReference>
<dbReference type="InterPro" id="IPR040390">
    <property type="entry name" value="TIFY/JAZ"/>
</dbReference>
<dbReference type="InterPro" id="IPR010399">
    <property type="entry name" value="Tify_dom"/>
</dbReference>
<dbReference type="PANTHER" id="PTHR33077:SF61">
    <property type="entry name" value="PROTEIN TIFY 3A-RELATED"/>
    <property type="match status" value="1"/>
</dbReference>
<dbReference type="PANTHER" id="PTHR33077">
    <property type="entry name" value="PROTEIN TIFY 4A-RELATED-RELATED"/>
    <property type="match status" value="1"/>
</dbReference>
<dbReference type="Pfam" id="PF09425">
    <property type="entry name" value="Jas_motif"/>
    <property type="match status" value="1"/>
</dbReference>
<dbReference type="Pfam" id="PF06200">
    <property type="entry name" value="tify"/>
    <property type="match status" value="1"/>
</dbReference>
<dbReference type="SMART" id="SM00979">
    <property type="entry name" value="TIFY"/>
    <property type="match status" value="1"/>
</dbReference>
<dbReference type="PROSITE" id="PS51320">
    <property type="entry name" value="TIFY"/>
    <property type="match status" value="1"/>
</dbReference>
<name>TIF3B_ARATH</name>
<keyword id="KW-0007">Acetylation</keyword>
<keyword id="KW-1184">Jasmonic acid signaling pathway</keyword>
<keyword id="KW-0539">Nucleus</keyword>
<keyword id="KW-0611">Plant defense</keyword>
<keyword id="KW-1185">Reference proteome</keyword>
<keyword id="KW-0804">Transcription</keyword>
<keyword id="KW-0805">Transcription regulation</keyword>
<keyword id="KW-0832">Ubl conjugation</keyword>
<protein>
    <recommendedName>
        <fullName evidence="13">Protein TIFY 3B</fullName>
    </recommendedName>
    <alternativeName>
        <fullName evidence="14 15">Jasmonate ZIM domain-containing protein 12</fullName>
    </alternativeName>
</protein>
<sequence length="187" mass="19933">MTKVKDEPRASVEGGCGVADGDGGAAEIGGTGSVEKSINEVRSTEIQTAEPTVPPNQLTIFFGGSVTVFDGLPSEKVQEILRIAAKAMETKNSTSISPVSSPALNRAPSFSSTSNVASPAAQPFPIQPISFCRSTADLPIARRHSLQRFLEKRRDRLVNKNPYPTSDFKKTDVPTGNVSIKEEFPTA</sequence>